<reference key="1">
    <citation type="journal article" date="2007" name="PLoS ONE">
        <title>The complete genome sequence and analysis of the Epsilonproteobacterium Arcobacter butzleri.</title>
        <authorList>
            <person name="Miller W.G."/>
            <person name="Parker C.T."/>
            <person name="Rubenfield M."/>
            <person name="Mendz G.L."/>
            <person name="Woesten M.M.S.M."/>
            <person name="Ussery D.W."/>
            <person name="Stolz J.F."/>
            <person name="Binnewies T.T."/>
            <person name="Hallin P.F."/>
            <person name="Wang G."/>
            <person name="Malek J.A."/>
            <person name="Rogosin A."/>
            <person name="Stanker L.H."/>
            <person name="Mandrell R.E."/>
        </authorList>
    </citation>
    <scope>NUCLEOTIDE SEQUENCE [LARGE SCALE GENOMIC DNA]</scope>
    <source>
        <strain>RM4018</strain>
    </source>
</reference>
<feature type="chain" id="PRO_1000057806" description="Arginine--tRNA ligase">
    <location>
        <begin position="1"/>
        <end position="529"/>
    </location>
</feature>
<feature type="short sequence motif" description="'HIGH' region">
    <location>
        <begin position="113"/>
        <end position="123"/>
    </location>
</feature>
<gene>
    <name evidence="1" type="primary">argS</name>
    <name type="ordered locus">Abu_2129</name>
</gene>
<accession>A8EWM0</accession>
<name>SYR_ALIB4</name>
<dbReference type="EC" id="6.1.1.19" evidence="1"/>
<dbReference type="EMBL" id="CP000361">
    <property type="protein sequence ID" value="ABV68343.1"/>
    <property type="molecule type" value="Genomic_DNA"/>
</dbReference>
<dbReference type="RefSeq" id="WP_012147994.1">
    <property type="nucleotide sequence ID" value="NC_009850.1"/>
</dbReference>
<dbReference type="SMR" id="A8EWM0"/>
<dbReference type="STRING" id="367737.Abu_2129"/>
<dbReference type="GeneID" id="24304490"/>
<dbReference type="KEGG" id="abu:Abu_2129"/>
<dbReference type="eggNOG" id="COG0018">
    <property type="taxonomic scope" value="Bacteria"/>
</dbReference>
<dbReference type="HOGENOM" id="CLU_006406_0_1_7"/>
<dbReference type="Proteomes" id="UP000001136">
    <property type="component" value="Chromosome"/>
</dbReference>
<dbReference type="GO" id="GO:0005737">
    <property type="term" value="C:cytoplasm"/>
    <property type="evidence" value="ECO:0007669"/>
    <property type="project" value="UniProtKB-SubCell"/>
</dbReference>
<dbReference type="GO" id="GO:0004814">
    <property type="term" value="F:arginine-tRNA ligase activity"/>
    <property type="evidence" value="ECO:0007669"/>
    <property type="project" value="UniProtKB-UniRule"/>
</dbReference>
<dbReference type="GO" id="GO:0005524">
    <property type="term" value="F:ATP binding"/>
    <property type="evidence" value="ECO:0007669"/>
    <property type="project" value="UniProtKB-UniRule"/>
</dbReference>
<dbReference type="GO" id="GO:0006420">
    <property type="term" value="P:arginyl-tRNA aminoacylation"/>
    <property type="evidence" value="ECO:0007669"/>
    <property type="project" value="UniProtKB-UniRule"/>
</dbReference>
<dbReference type="CDD" id="cd00671">
    <property type="entry name" value="ArgRS_core"/>
    <property type="match status" value="1"/>
</dbReference>
<dbReference type="FunFam" id="3.40.50.620:FF:000062">
    <property type="entry name" value="Arginine--tRNA ligase"/>
    <property type="match status" value="1"/>
</dbReference>
<dbReference type="Gene3D" id="3.30.1360.70">
    <property type="entry name" value="Arginyl tRNA synthetase N-terminal domain"/>
    <property type="match status" value="1"/>
</dbReference>
<dbReference type="Gene3D" id="3.40.50.620">
    <property type="entry name" value="HUPs"/>
    <property type="match status" value="1"/>
</dbReference>
<dbReference type="Gene3D" id="1.10.730.10">
    <property type="entry name" value="Isoleucyl-tRNA Synthetase, Domain 1"/>
    <property type="match status" value="1"/>
</dbReference>
<dbReference type="HAMAP" id="MF_00123">
    <property type="entry name" value="Arg_tRNA_synth"/>
    <property type="match status" value="1"/>
</dbReference>
<dbReference type="InterPro" id="IPR001412">
    <property type="entry name" value="aa-tRNA-synth_I_CS"/>
</dbReference>
<dbReference type="InterPro" id="IPR001278">
    <property type="entry name" value="Arg-tRNA-ligase"/>
</dbReference>
<dbReference type="InterPro" id="IPR005148">
    <property type="entry name" value="Arg-tRNA-synth_N"/>
</dbReference>
<dbReference type="InterPro" id="IPR036695">
    <property type="entry name" value="Arg-tRNA-synth_N_sf"/>
</dbReference>
<dbReference type="InterPro" id="IPR035684">
    <property type="entry name" value="ArgRS_core"/>
</dbReference>
<dbReference type="InterPro" id="IPR008909">
    <property type="entry name" value="DALR_anticod-bd"/>
</dbReference>
<dbReference type="InterPro" id="IPR014729">
    <property type="entry name" value="Rossmann-like_a/b/a_fold"/>
</dbReference>
<dbReference type="InterPro" id="IPR009080">
    <property type="entry name" value="tRNAsynth_Ia_anticodon-bd"/>
</dbReference>
<dbReference type="NCBIfam" id="TIGR00456">
    <property type="entry name" value="argS"/>
    <property type="match status" value="1"/>
</dbReference>
<dbReference type="PANTHER" id="PTHR11956:SF5">
    <property type="entry name" value="ARGININE--TRNA LIGASE, CYTOPLASMIC"/>
    <property type="match status" value="1"/>
</dbReference>
<dbReference type="PANTHER" id="PTHR11956">
    <property type="entry name" value="ARGINYL-TRNA SYNTHETASE"/>
    <property type="match status" value="1"/>
</dbReference>
<dbReference type="Pfam" id="PF03485">
    <property type="entry name" value="Arg_tRNA_synt_N"/>
    <property type="match status" value="1"/>
</dbReference>
<dbReference type="Pfam" id="PF05746">
    <property type="entry name" value="DALR_1"/>
    <property type="match status" value="1"/>
</dbReference>
<dbReference type="Pfam" id="PF00750">
    <property type="entry name" value="tRNA-synt_1d"/>
    <property type="match status" value="1"/>
</dbReference>
<dbReference type="PRINTS" id="PR01038">
    <property type="entry name" value="TRNASYNTHARG"/>
</dbReference>
<dbReference type="SMART" id="SM01016">
    <property type="entry name" value="Arg_tRNA_synt_N"/>
    <property type="match status" value="1"/>
</dbReference>
<dbReference type="SMART" id="SM00836">
    <property type="entry name" value="DALR_1"/>
    <property type="match status" value="1"/>
</dbReference>
<dbReference type="SUPFAM" id="SSF47323">
    <property type="entry name" value="Anticodon-binding domain of a subclass of class I aminoacyl-tRNA synthetases"/>
    <property type="match status" value="1"/>
</dbReference>
<dbReference type="SUPFAM" id="SSF55190">
    <property type="entry name" value="Arginyl-tRNA synthetase (ArgRS), N-terminal 'additional' domain"/>
    <property type="match status" value="1"/>
</dbReference>
<dbReference type="SUPFAM" id="SSF52374">
    <property type="entry name" value="Nucleotidylyl transferase"/>
    <property type="match status" value="1"/>
</dbReference>
<dbReference type="PROSITE" id="PS00178">
    <property type="entry name" value="AA_TRNA_LIGASE_I"/>
    <property type="match status" value="1"/>
</dbReference>
<sequence>MQNLVKEFIEKVLETNIVLEKPKDVSLGHYATPVAFSLAKELKKSPMLIAQELVTKLENPSLFEKIEAVNGFINFKLSPLFLQSLVDDALSNKENFAKQHKKSEKILLEYVSANPTGPLHIGHARGAIFGDSLARVGKYLGYDITTEYYINDAGSQMDLLGLSVNLAARDFIYGEDVSYPEVYYRGDYLIDIANQIIQDYGKDYLYDEKNFKDIALLGKDFVMNLIIKDLKDLGIEFDNFVSEKSLYSSWNETKRVLEENGSLYDKDDKTYLKSTQYGDDSDRVVVRDNGIPTYLAGDIIYHKNKYDRNFDRYINIWGADHHGYITRVKAAIEFLGNDSSKLEVLLSQMVQLLKGGEPYKMSKRKGNVILMSEITEEIGSDALRFIFLTKKSDTHLEFDIDTLKNQDSSNPIFYINYAHARINQVFVKAGVNFDDIKDISFEKLNQDGLNLVYESLLLESILVEAFAKRDMQKITEYLYNLASSIHKFYNEHKIIGSDEQNLYLKVLSIAALSIKVGLKLLGIEAKEIM</sequence>
<comment type="catalytic activity">
    <reaction evidence="1">
        <text>tRNA(Arg) + L-arginine + ATP = L-arginyl-tRNA(Arg) + AMP + diphosphate</text>
        <dbReference type="Rhea" id="RHEA:20301"/>
        <dbReference type="Rhea" id="RHEA-COMP:9658"/>
        <dbReference type="Rhea" id="RHEA-COMP:9673"/>
        <dbReference type="ChEBI" id="CHEBI:30616"/>
        <dbReference type="ChEBI" id="CHEBI:32682"/>
        <dbReference type="ChEBI" id="CHEBI:33019"/>
        <dbReference type="ChEBI" id="CHEBI:78442"/>
        <dbReference type="ChEBI" id="CHEBI:78513"/>
        <dbReference type="ChEBI" id="CHEBI:456215"/>
        <dbReference type="EC" id="6.1.1.19"/>
    </reaction>
</comment>
<comment type="subunit">
    <text evidence="1">Monomer.</text>
</comment>
<comment type="subcellular location">
    <subcellularLocation>
        <location evidence="1">Cytoplasm</location>
    </subcellularLocation>
</comment>
<comment type="similarity">
    <text evidence="1">Belongs to the class-I aminoacyl-tRNA synthetase family.</text>
</comment>
<proteinExistence type="inferred from homology"/>
<organism>
    <name type="scientific">Aliarcobacter butzleri (strain RM4018)</name>
    <name type="common">Arcobacter butzleri</name>
    <dbReference type="NCBI Taxonomy" id="367737"/>
    <lineage>
        <taxon>Bacteria</taxon>
        <taxon>Pseudomonadati</taxon>
        <taxon>Campylobacterota</taxon>
        <taxon>Epsilonproteobacteria</taxon>
        <taxon>Campylobacterales</taxon>
        <taxon>Arcobacteraceae</taxon>
        <taxon>Aliarcobacter</taxon>
    </lineage>
</organism>
<protein>
    <recommendedName>
        <fullName evidence="1">Arginine--tRNA ligase</fullName>
        <ecNumber evidence="1">6.1.1.19</ecNumber>
    </recommendedName>
    <alternativeName>
        <fullName evidence="1">Arginyl-tRNA synthetase</fullName>
        <shortName evidence="1">ArgRS</shortName>
    </alternativeName>
</protein>
<evidence type="ECO:0000255" key="1">
    <source>
        <dbReference type="HAMAP-Rule" id="MF_00123"/>
    </source>
</evidence>
<keyword id="KW-0030">Aminoacyl-tRNA synthetase</keyword>
<keyword id="KW-0067">ATP-binding</keyword>
<keyword id="KW-0963">Cytoplasm</keyword>
<keyword id="KW-0436">Ligase</keyword>
<keyword id="KW-0547">Nucleotide-binding</keyword>
<keyword id="KW-0648">Protein biosynthesis</keyword>
<keyword id="KW-1185">Reference proteome</keyword>